<comment type="function">
    <text evidence="5 6">Structural component of the egg vitelline envelope; forms long filaments. Functions as a species-specific receptor for the sperm protein lysin; prevents fertilization by sperm from other species. Each VERL chain can bind multiple copies of the sperm protein lysin; this creates a 3 um hole in the egg vitelline envelope through which the sperm passes.</text>
</comment>
<comment type="subunit">
    <text evidence="5 6">May form disulfide-linked homodimers (PubMed:28622512, PubMed:9192632). Interacts (via VERL repeats) with sperm lysin (PubMed:28622512, PubMed:9192632). Each VERL chain can bind numerous lysin molecules (PubMed:28622512, PubMed:9192632).</text>
</comment>
<comment type="subcellular location">
    <subcellularLocation>
        <location evidence="11">Cell membrane</location>
        <topology evidence="1">Single-pass membrane protein</topology>
    </subcellularLocation>
    <subcellularLocation>
        <location evidence="11">Secreted</location>
        <location evidence="11">Extracellular space</location>
        <location evidence="11">Extracellular matrix</location>
    </subcellularLocation>
</comment>
<comment type="developmental stage">
    <text evidence="6">Detected on the egg vitelline envelope (at protein level).</text>
</comment>
<comment type="domain">
    <text evidence="5">VERL repeat 2 is important for species-specific lysin binding, even if it has lower affinity for lysin than VERL repeat 3. VERL repeats 3 to 22 have high sequence similarity, indicating they all can bind lysin equally well, but they do not play a role in species-specific sperm selection. VERL repeat 1 does not bind lysin.</text>
</comment>
<comment type="PTM">
    <text evidence="5 6">N-glycosylated (PubMed:28622512, PubMed:9192632). About half of the glycoprotein mass corresponds to carbohydrate chains (PubMed:9192632). N-glycosylation is not required for lysin binding (PubMed:28622512).</text>
</comment>
<comment type="PTM">
    <text evidence="5">O-glycosylated. O-glycosylation is not required for lysin binding.</text>
</comment>
<reference evidence="14" key="1">
    <citation type="journal article" date="2002" name="Gene">
        <title>Full-length sequence of VERL, the egg vitelline envelope receptor for abalone sperm lysin.</title>
        <authorList>
            <person name="Galindo B.E."/>
            <person name="Moy G.W."/>
            <person name="Swanson W.J."/>
            <person name="Vacquier V.D."/>
        </authorList>
    </citation>
    <scope>NUCLEOTIDE SEQUENCE [MRNA]</scope>
</reference>
<reference evidence="12" key="2">
    <citation type="journal article" date="1998" name="Science">
        <title>Concerted evolution in an egg receptor for a rapidly evolving abalone sperm protein.</title>
        <authorList>
            <person name="Swanson W.J."/>
            <person name="Vacquier V.D."/>
        </authorList>
    </citation>
    <scope>NUCLEOTIDE SEQUENCE [GENOMIC DNA] OF 2673-2825 AND 2979-3131</scope>
</reference>
<reference evidence="13" key="3">
    <citation type="journal article" date="2001" name="Mol. Biol. Evol.">
        <title>Polymorphism in abalone fertilization proteins is consistent with the neutral evolution of the egg's receptor for lysin (VERL) and positive darwinian selection of sperm lysin.</title>
        <authorList>
            <person name="Swanson W.J."/>
            <person name="Aquadro C.F."/>
            <person name="Vacquier V.D."/>
        </authorList>
    </citation>
    <scope>NUCLEOTIDE SEQUENCE [GENOMIC DNA] OF 3243-3483</scope>
</reference>
<reference key="4">
    <citation type="journal article" date="1997" name="Proc. Natl. Acad. Sci. U.S.A.">
        <title>The abalone egg vitelline envelope receptor for sperm lysin is a giant multivalent molecule.</title>
        <authorList>
            <person name="Swanson W.J."/>
            <person name="Vacquier V.D."/>
        </authorList>
    </citation>
    <scope>FUNCTION</scope>
    <scope>SUBCELLULAR LOCATION</scope>
    <scope>INTERACTION WITH LYSIN</scope>
    <scope>SUBUNIT</scope>
    <scope>GLYCOSYLATION</scope>
    <scope>DEVELOPMENTAL STAGE</scope>
</reference>
<reference key="5">
    <citation type="journal article" date="2017" name="Cell">
        <title>Structural basis of egg coat-sperm recognition at fertilization.</title>
        <authorList>
            <person name="Raj I."/>
            <person name="Sadat Al Hosseini H."/>
            <person name="Dioguardi E."/>
            <person name="Nishimura K."/>
            <person name="Han L."/>
            <person name="Villa A."/>
            <person name="de Sanctis D."/>
            <person name="Jovine L."/>
        </authorList>
    </citation>
    <scope>X-RAY CRYSTALLOGRAPHY (1.64 ANGSTROMS) OF 38-453 IN COMPLEXES WITH LYSIN</scope>
    <scope>FUNCTION</scope>
    <scope>INTERACTION WITH LYSIN</scope>
    <scope>SUBUNIT</scope>
    <scope>DOMAIN</scope>
    <scope>DISULFIDE BOND</scope>
    <scope>GLYCOSYLATION AT ASN-254; ASN-373 AND ASN-417</scope>
    <scope>MUTAGENESIS OF PHE-181; LEU-228; GLU-384; ASN-388 AND MET-389</scope>
</reference>
<name>VERL_HALRU</name>
<protein>
    <recommendedName>
        <fullName evidence="7">Vitelline envelope sperm lysin receptor</fullName>
    </recommendedName>
</protein>
<organism evidence="14">
    <name type="scientific">Haliotis rufescens</name>
    <name type="common">California red abalone</name>
    <dbReference type="NCBI Taxonomy" id="6454"/>
    <lineage>
        <taxon>Eukaryota</taxon>
        <taxon>Metazoa</taxon>
        <taxon>Spiralia</taxon>
        <taxon>Lophotrochozoa</taxon>
        <taxon>Mollusca</taxon>
        <taxon>Gastropoda</taxon>
        <taxon>Vetigastropoda</taxon>
        <taxon>Lepetellida</taxon>
        <taxon>Haliotoidea</taxon>
        <taxon>Haliotidae</taxon>
        <taxon>Haliotis</taxon>
    </lineage>
</organism>
<gene>
    <name evidence="8 14" type="primary">VERL</name>
</gene>
<keyword id="KW-0002">3D-structure</keyword>
<keyword id="KW-1003">Cell membrane</keyword>
<keyword id="KW-1015">Disulfide bond</keyword>
<keyword id="KW-0272">Extracellular matrix</keyword>
<keyword id="KW-0278">Fertilization</keyword>
<keyword id="KW-0325">Glycoprotein</keyword>
<keyword id="KW-0472">Membrane</keyword>
<keyword id="KW-0675">Receptor</keyword>
<keyword id="KW-0677">Repeat</keyword>
<keyword id="KW-0964">Secreted</keyword>
<keyword id="KW-0732">Signal</keyword>
<keyword id="KW-0812">Transmembrane</keyword>
<keyword id="KW-1133">Transmembrane helix</keyword>
<evidence type="ECO:0000255" key="1"/>
<evidence type="ECO:0000255" key="2">
    <source>
        <dbReference type="PROSITE-ProRule" id="PRU00375"/>
    </source>
</evidence>
<evidence type="ECO:0000255" key="3">
    <source>
        <dbReference type="PROSITE-ProRule" id="PRU00498"/>
    </source>
</evidence>
<evidence type="ECO:0000256" key="4">
    <source>
        <dbReference type="SAM" id="MobiDB-lite"/>
    </source>
</evidence>
<evidence type="ECO:0000269" key="5">
    <source>
    </source>
</evidence>
<evidence type="ECO:0000269" key="6">
    <source>
    </source>
</evidence>
<evidence type="ECO:0000303" key="7">
    <source>
    </source>
</evidence>
<evidence type="ECO:0000303" key="8">
    <source>
    </source>
</evidence>
<evidence type="ECO:0000305" key="9"/>
<evidence type="ECO:0000305" key="10">
    <source>
    </source>
</evidence>
<evidence type="ECO:0000305" key="11">
    <source>
    </source>
</evidence>
<evidence type="ECO:0000312" key="12">
    <source>
        <dbReference type="EMBL" id="AAC31410.1"/>
    </source>
</evidence>
<evidence type="ECO:0000312" key="13">
    <source>
        <dbReference type="EMBL" id="AAK20409.1"/>
    </source>
</evidence>
<evidence type="ECO:0000312" key="14">
    <source>
        <dbReference type="EMBL" id="AAL50827.1"/>
    </source>
</evidence>
<evidence type="ECO:0007744" key="15">
    <source>
        <dbReference type="PDB" id="5II4"/>
    </source>
</evidence>
<evidence type="ECO:0007744" key="16">
    <source>
        <dbReference type="PDB" id="5II5"/>
    </source>
</evidence>
<evidence type="ECO:0007744" key="17">
    <source>
        <dbReference type="PDB" id="5IIA"/>
    </source>
</evidence>
<evidence type="ECO:0007744" key="18">
    <source>
        <dbReference type="PDB" id="5IIB"/>
    </source>
</evidence>
<evidence type="ECO:0007744" key="19">
    <source>
        <dbReference type="PDB" id="5IIC"/>
    </source>
</evidence>
<evidence type="ECO:0007744" key="20">
    <source>
        <dbReference type="PDB" id="5MR2"/>
    </source>
</evidence>
<evidence type="ECO:0007744" key="21">
    <source>
        <dbReference type="PDB" id="5MR3"/>
    </source>
</evidence>
<evidence type="ECO:0007829" key="22">
    <source>
        <dbReference type="PDB" id="5II5"/>
    </source>
</evidence>
<evidence type="ECO:0007829" key="23">
    <source>
        <dbReference type="PDB" id="5IIB"/>
    </source>
</evidence>
<evidence type="ECO:0007829" key="24">
    <source>
        <dbReference type="PDB" id="5IIC"/>
    </source>
</evidence>
<evidence type="ECO:0007829" key="25">
    <source>
        <dbReference type="PDB" id="5MR3"/>
    </source>
</evidence>
<accession>Q8WR62</accession>
<accession>Q9BKI0</accession>
<accession>Q9TZY2</accession>
<accession>Q9TZY3</accession>
<sequence>MSGMQWSFGFSCLFFLKTVWICQAFDADTPDPRVLSLDLTLVCSDDKSKQATLISYPVTFKGHVIKDMQIFCKNGWMQMTRGRGINMIRIHYPQTYTSVVPGACVFRGPYSVPTNDSIEMYNVSVALLWSDGTPTYESLECNVTKSQASNAPEPKASPTSSTPQPEAASHNQSKLIDWDVFCSQNENIPAKFISRLVAPKCLAVEKMDVDCSNGLVPITHEHGFNMMLIQYTRNKLLDSPGMCVFWGPYSVPKNDTVVLYTVTARLKWSEGPPTDLSIQCYMPKSPDAPKPESCLSSPPEPEASPSSNAPEPETYPTSSAPEKVSSDQPAPSHNQSKLIDWDVYCSQDESIPAKFISRLVTSKDQALEKTEINCSNGLVPITQEFGINMMLIQYTRNELLDSPGMCVFWGPYSVPKNDTVVLYTVTARLKWSEGPPTNLSIQCYMPKSPVAPKPETGPTSNAPEPETYPTSSAPEKVSSDQPAPSHNQSKLIDWDVYCSQNESIPAKFISRLVTSKDQALEKTEINCSNGLVPITQEFGINMMLIQYTRNELLDSPGMCVFWGPYSVPKNDTVVLYTVTARLKWSEGPPTNLSIECYMPKSPVAPKPETGPTSNAPEPETYPTSSAPEKVSSDQPAPSHNQSKLIDWDVYCSQNESIPAKFISRLVTSKDQALEKTEINCSNGLVPITQEFGINMMLIQYTRNELLDSPGMCVFWGPYSVPKNDTVVLYTVTARLKWSEGPPTNLSIECYMPKSPVAPKPETGPSSNAPEPETYPTSSAPEKVSSDQPAPSHNQSKLIDWDVYCSQNESIPAKFISRLVTSKDQALEKTEINCSNGLVPITQEFGINMMLIQYTRNELLDSPGMCVFWGPYSVPKNDTVVLYTVTARLKWSEGPPTNLSIECYMPKSPVAPKPETGPTSNAPEPETYPTSSAPEKVSSDQPAPSHNQSKLIDWDVYCSQNESIPAKFISRLVTSKDQALEKTEINCSNGLVPITHEFGINMMLIQYTRNELLDSPGMCVFWGPYSVPKNDTVVLYTVTARLKWSEGPPTNLSIECYMPKSPVAPKPETGPTSNAPEPETYPTSSAPEKVSSDQPAPSHNQSKLIDWDVYCSQNESIPAKFISRLVTSKDQALEKTEINCSNGLVPITQEFGINMMLIQYTRNELLDSPGMCVFWGPYSVPKNDTVVLYTVTARLKWSEGPPTNLSIECYMPKSPVAPKPETGPTSNAPEPETYPTSSAPEKVSSDQPAPSHNQSKLIDWDVYCSQNESIPAKFISRLVTSKDQALEKTEINCSNGLVPITHKFGINMMLIQYTRNELLDSPGMCVFWGPYSVPKNDTVVLYTVTARLKWSEGPPTNLSIECYMPKSPVAHKPETGPTSNAPEPETYPTSSAPEKVSSDQPAPSHNQSKLIDWDVYCSQNESIPAKFISLVTSKDQALEKTEINCSNGLVPITHEFGINMMLIQYTRNELLDSPGMCVFWGPYSVPKNDTVVLYTVTARLKWSEGPPTNLPIECYMPKSPVAPKPETGPSSNAPEPETYPTSSAPEKVYSDQPAPSHNQSKLIDWDVYCSQNESIPAKFISRLVTSKDQALEKTEINCSNGLVPITHEFGINMMLIQYTRNELLDSPGMCVFWGPYSVPKNDTVVLYTVTARLKWSEGPPTNLSIECYMPKSPVAPKPETGPTSNAPEPQTYPTSSAPEKVSSDQPAPSHNQSKLIDWDVYCSQNESIPAKFISRLVTSKDQALEKTEINCSNGLVPITQEFGINMMLIQYTRNELLDSPGMCVFWGPYSVPKNDTVVLYTVTARLKWSEGPPTNLSIECYMPKSPVAPKPETGPTSNAPEPETYPTSSAPEKVSSDQPAPSHNQSKLIDWDVYCSQNESIPAKFISRLVTSKDQALEKTEINCSNGLVPITHEFGINMMLIQYTRNELLDSPGMCVFWGPYSVPKNDTVVLYTVTARLKWSEGPPTNLSIECYMPKSPVAPKPETGPTSNAPEPETYPTSSAPEKVSSDQPAPSHNQSKLIDWDVYCSQNESFPAKFISRLVTSKDQALEKTEINCSNGLVPITQEFGINMMLIQYTRNELLDSPGMCVFWGPYSVPKNDTVVLYTVTARLKWSEGPPTNLSIECYMPKSPVAPKPETGPTSNAPEPETYPTSSAPEKVSSDQPAPSHNQSKLIDWDVYCSQNESIPAKFISRLVTSKDQALEKTEINCSNGLVPITQEFGINMMLIQYTRNELLDSPGMCVFWGPYSVPKNDTVVLYTVTARLKWSEGPPTNLSIECYMPKSPVAPKPETGPTSNAPEPETYPTSSAPEKVSSDQPAPSHNQSKLIDWDVYCSQNESIPAKFISRLVTSKDQALEKTEINCSNGLVPITQEFGINMMLIQYTRNELLDSPGMCVFWGPYSVPKNDTVVLYTVTARLKWSEGPPTNLSIECYMPKSPVAPKPETGPTSNAPEPETYPTSSAPEKVSSDQPAPSHNQSKLIDWDVYCSQNESFPAKFISRLVTSKDQALEKTEINCSNGLVPITQEFGINMMLIQYTRNELLDSPGMCVFWGPYSVPKNDTVVLYTVTARLKWSEGPPTNLSIECYMPKSPVAPKPETGPTSNAPEPQTYPTSSAPEKVSSDQPAPSHNQSKLIDWDVYCSQNESIPAKFISRLVTSKDQALEKTEINCSNGLVPITQEFGINMMLIQYTRNELLDSPGMCVFWGPYSVPKNDTVVLYTVTARLKWSEGPPTNLSIECYMPKSPVAPKPETGPTSNAPEPETYPTSSAPEKVSSDQPAPSHNQSKLIDWDVYCSQNESFPAKFISRLVTSKDQALEKTEINCSNGLVPITHEFGINMMLIQYTRNELLDSPGMCVFWGPYSVPKNDTVVLYTVTARLKWSEGPPTNLSIECYMPKSPVAPKPETGPTSNAPEPQTYPTSSAPEKVSSDQPAPSHNQSKLIDWDVYCSQNESFPAKFISRLVTSKDQALEKTEINCSNGLVPITQEFGINMMLIQYTRNELLDSPGMCVFWGPYSVPKNDTVVLYTVTARLKWSEGPPTNLSIECYMPKSPVAPKPETGPTSNAPEPETYPTSSAPEKVSSDQPAPSHNQSKLIDWDVYCSQNESIPAKFISRLVTSKDQALEKTEINCSNGLVPITQEFGINMMLIQYTRNELLDSPGMCVFWGPYSVPKNDTVVLYTVTARLKWSEGPPTNLSIECYMPKSPVAPKPETYPTSSAPEKVSSDQPAPSHNQSKLIDWDVYCSQNESIPAKFISRLVTSKDQALEKTEINCSNGLVPITHEFGINMMLIQYTRNELLDSPGMCVFWGPYSVPKNDTVVLYTVTARLKWSEGPPTNLSIECYMPKSPVAPKPEASPTSNAPEPQTYPTSSAPGTSPEGSATAAPGTSPEGNTTAARNAYPRKSNQTTSTEDVLDDTSNYIIKVIPHCRTRGDVALIEIITDVDLSAVAVCSNGSRHHFNSTDFVHFYLPVSYNFTPSVCAFTRSKANLFKLHIGVSWKDRLHDVTTQKKDFLITCTFDPHKSHRGPTSASSEPLIAAKEIQSHQGPQSDAEEVFLKLVDIRNETLAAAVPLSKKVRLVGEVHGSSLESGLKPVACDAVGVQQGQRYTILRDGCGDGIVFAKDIGFITEGNKAFSPVFEVFKLHGNLHLTFMCNFTLCSHSCDGSSCSNQRRTRRSMAWQDIPHVADFDSSATPSTDMATVQVALLVAVALLITQLAGLAIYVNIN</sequence>
<proteinExistence type="evidence at protein level"/>
<dbReference type="EMBL" id="AF453553">
    <property type="protein sequence ID" value="AAL50827.1"/>
    <property type="molecule type" value="mRNA"/>
</dbReference>
<dbReference type="EMBL" id="AF053665">
    <property type="protein sequence ID" value="AAC31408.1"/>
    <property type="molecule type" value="Genomic_DNA"/>
</dbReference>
<dbReference type="EMBL" id="AF053667">
    <property type="protein sequence ID" value="AAC31410.1"/>
    <property type="molecule type" value="Genomic_DNA"/>
</dbReference>
<dbReference type="EMBL" id="AF250899">
    <property type="protein sequence ID" value="AAK20409.1"/>
    <property type="molecule type" value="Genomic_DNA"/>
</dbReference>
<dbReference type="PDB" id="5II4">
    <property type="method" value="X-ray"/>
    <property type="resolution" value="2.00 A"/>
    <property type="chains" value="A=38-175"/>
</dbReference>
<dbReference type="PDB" id="5II5">
    <property type="method" value="X-ray"/>
    <property type="resolution" value="1.80 A"/>
    <property type="chains" value="A=38-151"/>
</dbReference>
<dbReference type="PDB" id="5IIA">
    <property type="method" value="X-ray"/>
    <property type="resolution" value="1.70 A"/>
    <property type="chains" value="B/D/F/H=340-453"/>
</dbReference>
<dbReference type="PDB" id="5IIB">
    <property type="method" value="X-ray"/>
    <property type="resolution" value="1.64 A"/>
    <property type="chains" value="B=340-453"/>
</dbReference>
<dbReference type="PDB" id="5IIC">
    <property type="method" value="X-ray"/>
    <property type="resolution" value="2.90 A"/>
    <property type="chains" value="A/B=340-453"/>
</dbReference>
<dbReference type="PDB" id="5MR2">
    <property type="method" value="X-ray"/>
    <property type="resolution" value="2.50 A"/>
    <property type="chains" value="A/B/C=176-298"/>
</dbReference>
<dbReference type="PDB" id="5MR3">
    <property type="method" value="X-ray"/>
    <property type="resolution" value="1.80 A"/>
    <property type="chains" value="B/D/F/H=176-298"/>
</dbReference>
<dbReference type="PDBsum" id="5II4"/>
<dbReference type="PDBsum" id="5II5"/>
<dbReference type="PDBsum" id="5IIA"/>
<dbReference type="PDBsum" id="5IIB"/>
<dbReference type="PDBsum" id="5IIC"/>
<dbReference type="PDBsum" id="5MR2"/>
<dbReference type="PDBsum" id="5MR3"/>
<dbReference type="SMR" id="Q8WR62"/>
<dbReference type="GlyCosmos" id="Q8WR62">
    <property type="glycosylation" value="109 sites, No reported glycans"/>
</dbReference>
<dbReference type="iPTMnet" id="Q8WR62"/>
<dbReference type="OrthoDB" id="10681211at2759"/>
<dbReference type="GO" id="GO:0005576">
    <property type="term" value="C:extracellular region"/>
    <property type="evidence" value="ECO:0007669"/>
    <property type="project" value="UniProtKB-KW"/>
</dbReference>
<dbReference type="GO" id="GO:0005886">
    <property type="term" value="C:plasma membrane"/>
    <property type="evidence" value="ECO:0007669"/>
    <property type="project" value="UniProtKB-SubCell"/>
</dbReference>
<dbReference type="GO" id="GO:0060388">
    <property type="term" value="C:vitelline envelope"/>
    <property type="evidence" value="ECO:0000314"/>
    <property type="project" value="UniProtKB"/>
</dbReference>
<dbReference type="GO" id="GO:0035036">
    <property type="term" value="P:sperm-egg recognition"/>
    <property type="evidence" value="ECO:0000314"/>
    <property type="project" value="UniProtKB"/>
</dbReference>
<dbReference type="InterPro" id="IPR021526">
    <property type="entry name" value="Vitelline_env_lysin-recpt"/>
</dbReference>
<dbReference type="InterPro" id="IPR001507">
    <property type="entry name" value="ZP_dom"/>
</dbReference>
<dbReference type="PANTHER" id="PTHR24216:SF65">
    <property type="entry name" value="PAXILLIN-LIKE PROTEIN 1"/>
    <property type="match status" value="1"/>
</dbReference>
<dbReference type="PANTHER" id="PTHR24216">
    <property type="entry name" value="PAXILLIN-RELATED"/>
    <property type="match status" value="1"/>
</dbReference>
<dbReference type="Pfam" id="PF11386">
    <property type="entry name" value="VERL"/>
    <property type="match status" value="22"/>
</dbReference>
<dbReference type="Pfam" id="PF25272">
    <property type="entry name" value="VERL_C"/>
    <property type="match status" value="1"/>
</dbReference>
<dbReference type="PROSITE" id="PS51034">
    <property type="entry name" value="ZP_2"/>
    <property type="match status" value="1"/>
</dbReference>
<feature type="signal peptide" evidence="1">
    <location>
        <begin position="1"/>
        <end position="24"/>
    </location>
</feature>
<feature type="chain" id="PRO_5004317630" description="Vitelline envelope sperm lysin receptor">
    <location>
        <begin position="25"/>
        <end position="3722"/>
    </location>
</feature>
<feature type="topological domain" description="Extracellular" evidence="9">
    <location>
        <begin position="25"/>
        <end position="3698"/>
    </location>
</feature>
<feature type="transmembrane region" description="Helical" evidence="1">
    <location>
        <begin position="3699"/>
        <end position="3719"/>
    </location>
</feature>
<feature type="topological domain" description="Cytoplasmic" evidence="9">
    <location>
        <begin position="3720"/>
        <end position="3722"/>
    </location>
</feature>
<feature type="repeat" description="VERL 1" evidence="9">
    <location>
        <begin position="77"/>
        <end position="155"/>
    </location>
</feature>
<feature type="repeat" description="VERL 2" evidence="9">
    <location>
        <begin position="216"/>
        <end position="293"/>
    </location>
</feature>
<feature type="repeat" description="VERL 3" evidence="9">
    <location>
        <begin position="379"/>
        <end position="455"/>
    </location>
</feature>
<feature type="repeat" description="VERL 4" evidence="9">
    <location>
        <begin position="532"/>
        <end position="608"/>
    </location>
</feature>
<feature type="repeat" description="VERL 5" evidence="9">
    <location>
        <begin position="685"/>
        <end position="761"/>
    </location>
</feature>
<feature type="repeat" description="VERL 6" evidence="9">
    <location>
        <begin position="838"/>
        <end position="914"/>
    </location>
</feature>
<feature type="repeat" description="VERL 7" evidence="9">
    <location>
        <begin position="991"/>
        <end position="1067"/>
    </location>
</feature>
<feature type="repeat" description="VERL 8" evidence="9">
    <location>
        <begin position="1144"/>
        <end position="1220"/>
    </location>
</feature>
<feature type="repeat" description="VERL 9" evidence="9">
    <location>
        <begin position="1297"/>
        <end position="1373"/>
    </location>
</feature>
<feature type="repeat" description="VERL 10" evidence="9">
    <location>
        <begin position="1449"/>
        <end position="1525"/>
    </location>
</feature>
<feature type="repeat" description="VERL 11" evidence="9">
    <location>
        <begin position="1602"/>
        <end position="1678"/>
    </location>
</feature>
<feature type="repeat" description="VERL 12" evidence="9">
    <location>
        <begin position="1755"/>
        <end position="1831"/>
    </location>
</feature>
<feature type="repeat" description="VERL 13" evidence="9">
    <location>
        <begin position="1908"/>
        <end position="1984"/>
    </location>
</feature>
<feature type="repeat" description="VERL 14" evidence="9">
    <location>
        <begin position="2061"/>
        <end position="2137"/>
    </location>
</feature>
<feature type="repeat" description="VERL 15" evidence="9">
    <location>
        <begin position="2214"/>
        <end position="2290"/>
    </location>
</feature>
<feature type="repeat" description="VERL 16" evidence="9">
    <location>
        <begin position="2367"/>
        <end position="2443"/>
    </location>
</feature>
<feature type="repeat" description="VERL 17" evidence="9">
    <location>
        <begin position="2520"/>
        <end position="2596"/>
    </location>
</feature>
<feature type="repeat" description="VERL 18" evidence="9">
    <location>
        <begin position="2673"/>
        <end position="2749"/>
    </location>
</feature>
<feature type="repeat" description="VERL 19" evidence="9">
    <location>
        <begin position="2826"/>
        <end position="2902"/>
    </location>
</feature>
<feature type="repeat" description="VERL 20" evidence="9">
    <location>
        <begin position="2979"/>
        <end position="3055"/>
    </location>
</feature>
<feature type="repeat" description="VERL 21" evidence="9">
    <location>
        <begin position="3132"/>
        <end position="3208"/>
    </location>
</feature>
<feature type="repeat" description="VERL 22" evidence="9">
    <location>
        <begin position="3274"/>
        <end position="3351"/>
    </location>
</feature>
<feature type="domain" description="ZP" evidence="2">
    <location>
        <begin position="3408"/>
        <end position="3670"/>
    </location>
</feature>
<feature type="region of interest" description="Disordered" evidence="4">
    <location>
        <begin position="146"/>
        <end position="169"/>
    </location>
</feature>
<feature type="region of interest" description="Disordered" evidence="4">
    <location>
        <begin position="279"/>
        <end position="335"/>
    </location>
</feature>
<feature type="region of interest" description="Disordered" evidence="4">
    <location>
        <begin position="443"/>
        <end position="488"/>
    </location>
</feature>
<feature type="region of interest" description="Disordered" evidence="4">
    <location>
        <begin position="603"/>
        <end position="641"/>
    </location>
</feature>
<feature type="region of interest" description="Disordered" evidence="4">
    <location>
        <begin position="756"/>
        <end position="794"/>
    </location>
</feature>
<feature type="region of interest" description="Disordered" evidence="4">
    <location>
        <begin position="909"/>
        <end position="947"/>
    </location>
</feature>
<feature type="region of interest" description="Disordered" evidence="4">
    <location>
        <begin position="1062"/>
        <end position="1100"/>
    </location>
</feature>
<feature type="region of interest" description="Disordered" evidence="4">
    <location>
        <begin position="1215"/>
        <end position="1253"/>
    </location>
</feature>
<feature type="region of interest" description="Disordered" evidence="4">
    <location>
        <begin position="1368"/>
        <end position="1406"/>
    </location>
</feature>
<feature type="region of interest" description="Disordered" evidence="4">
    <location>
        <begin position="1519"/>
        <end position="1556"/>
    </location>
</feature>
<feature type="region of interest" description="Disordered" evidence="4">
    <location>
        <begin position="1672"/>
        <end position="1711"/>
    </location>
</feature>
<feature type="region of interest" description="Disordered" evidence="4">
    <location>
        <begin position="1826"/>
        <end position="1864"/>
    </location>
</feature>
<feature type="region of interest" description="Disordered" evidence="4">
    <location>
        <begin position="1979"/>
        <end position="2017"/>
    </location>
</feature>
<feature type="region of interest" description="Disordered" evidence="4">
    <location>
        <begin position="2132"/>
        <end position="2170"/>
    </location>
</feature>
<feature type="region of interest" description="Disordered" evidence="4">
    <location>
        <begin position="2285"/>
        <end position="2323"/>
    </location>
</feature>
<feature type="region of interest" description="Disordered" evidence="4">
    <location>
        <begin position="2438"/>
        <end position="2476"/>
    </location>
</feature>
<feature type="region of interest" description="Disordered" evidence="4">
    <location>
        <begin position="2590"/>
        <end position="2629"/>
    </location>
</feature>
<feature type="region of interest" description="Disordered" evidence="4">
    <location>
        <begin position="2744"/>
        <end position="2782"/>
    </location>
</feature>
<feature type="region of interest" description="Disordered" evidence="4">
    <location>
        <begin position="2897"/>
        <end position="2935"/>
    </location>
</feature>
<feature type="region of interest" description="Disordered" evidence="4">
    <location>
        <begin position="3050"/>
        <end position="3088"/>
    </location>
</feature>
<feature type="region of interest" description="Disordered" evidence="4">
    <location>
        <begin position="3205"/>
        <end position="3230"/>
    </location>
</feature>
<feature type="region of interest" description="Disordered" evidence="4">
    <location>
        <begin position="3345"/>
        <end position="3407"/>
    </location>
</feature>
<feature type="compositionally biased region" description="Polar residues" evidence="4">
    <location>
        <begin position="157"/>
        <end position="169"/>
    </location>
</feature>
<feature type="compositionally biased region" description="Low complexity" evidence="4">
    <location>
        <begin position="291"/>
        <end position="312"/>
    </location>
</feature>
<feature type="compositionally biased region" description="Polar residues" evidence="4">
    <location>
        <begin position="315"/>
        <end position="335"/>
    </location>
</feature>
<feature type="compositionally biased region" description="Polar residues" evidence="4">
    <location>
        <begin position="457"/>
        <end position="488"/>
    </location>
</feature>
<feature type="compositionally biased region" description="Polar residues" evidence="4">
    <location>
        <begin position="610"/>
        <end position="641"/>
    </location>
</feature>
<feature type="compositionally biased region" description="Polar residues" evidence="4">
    <location>
        <begin position="763"/>
        <end position="794"/>
    </location>
</feature>
<feature type="compositionally biased region" description="Polar residues" evidence="4">
    <location>
        <begin position="916"/>
        <end position="947"/>
    </location>
</feature>
<feature type="compositionally biased region" description="Polar residues" evidence="4">
    <location>
        <begin position="1069"/>
        <end position="1100"/>
    </location>
</feature>
<feature type="compositionally biased region" description="Polar residues" evidence="4">
    <location>
        <begin position="1222"/>
        <end position="1253"/>
    </location>
</feature>
<feature type="compositionally biased region" description="Polar residues" evidence="4">
    <location>
        <begin position="1375"/>
        <end position="1406"/>
    </location>
</feature>
<feature type="compositionally biased region" description="Polar residues" evidence="4">
    <location>
        <begin position="1527"/>
        <end position="1543"/>
    </location>
</feature>
<feature type="compositionally biased region" description="Polar residues" evidence="4">
    <location>
        <begin position="1680"/>
        <end position="1711"/>
    </location>
</feature>
<feature type="compositionally biased region" description="Polar residues" evidence="4">
    <location>
        <begin position="1833"/>
        <end position="1864"/>
    </location>
</feature>
<feature type="compositionally biased region" description="Polar residues" evidence="4">
    <location>
        <begin position="1986"/>
        <end position="2017"/>
    </location>
</feature>
<feature type="compositionally biased region" description="Polar residues" evidence="4">
    <location>
        <begin position="2139"/>
        <end position="2170"/>
    </location>
</feature>
<feature type="compositionally biased region" description="Polar residues" evidence="4">
    <location>
        <begin position="2292"/>
        <end position="2323"/>
    </location>
</feature>
<feature type="compositionally biased region" description="Polar residues" evidence="4">
    <location>
        <begin position="2445"/>
        <end position="2476"/>
    </location>
</feature>
<feature type="compositionally biased region" description="Polar residues" evidence="4">
    <location>
        <begin position="2598"/>
        <end position="2629"/>
    </location>
</feature>
<feature type="compositionally biased region" description="Polar residues" evidence="4">
    <location>
        <begin position="2751"/>
        <end position="2782"/>
    </location>
</feature>
<feature type="compositionally biased region" description="Polar residues" evidence="4">
    <location>
        <begin position="2904"/>
        <end position="2935"/>
    </location>
</feature>
<feature type="compositionally biased region" description="Polar residues" evidence="4">
    <location>
        <begin position="3057"/>
        <end position="3088"/>
    </location>
</feature>
<feature type="compositionally biased region" description="Polar residues" evidence="4">
    <location>
        <begin position="3210"/>
        <end position="3230"/>
    </location>
</feature>
<feature type="compositionally biased region" description="Polar residues" evidence="4">
    <location>
        <begin position="3352"/>
        <end position="3375"/>
    </location>
</feature>
<feature type="glycosylation site" description="N-linked (GlcNAc...) asparagine" evidence="3">
    <location>
        <position position="115"/>
    </location>
</feature>
<feature type="glycosylation site" description="N-linked (GlcNAc...) asparagine" evidence="3">
    <location>
        <position position="122"/>
    </location>
</feature>
<feature type="glycosylation site" description="N-linked (GlcNAc...) asparagine" evidence="3">
    <location>
        <position position="142"/>
    </location>
</feature>
<feature type="glycosylation site" description="N-linked (GlcNAc...) asparagine" evidence="3">
    <location>
        <position position="171"/>
    </location>
</feature>
<feature type="glycosylation site" description="N-linked (GlcNAc...) asparagine" evidence="5">
    <location>
        <position position="254"/>
    </location>
</feature>
<feature type="glycosylation site" description="N-linked (GlcNAc...) asparagine" evidence="3">
    <location>
        <position position="334"/>
    </location>
</feature>
<feature type="glycosylation site" description="N-linked (GlcNAc...) asparagine" evidence="5">
    <location>
        <position position="373"/>
    </location>
</feature>
<feature type="glycosylation site" description="N-linked (GlcNAc...) asparagine" evidence="5">
    <location>
        <position position="417"/>
    </location>
</feature>
<feature type="glycosylation site" description="N-linked (GlcNAc...) asparagine" evidence="3">
    <location>
        <position position="438"/>
    </location>
</feature>
<feature type="glycosylation site" description="N-linked (GlcNAc...) asparagine" evidence="3">
    <location>
        <position position="487"/>
    </location>
</feature>
<feature type="glycosylation site" description="N-linked (GlcNAc...) asparagine" evidence="3">
    <location>
        <position position="501"/>
    </location>
</feature>
<feature type="glycosylation site" description="N-linked (GlcNAc...) asparagine" evidence="3">
    <location>
        <position position="526"/>
    </location>
</feature>
<feature type="glycosylation site" description="N-linked (GlcNAc...) asparagine" evidence="3">
    <location>
        <position position="570"/>
    </location>
</feature>
<feature type="glycosylation site" description="N-linked (GlcNAc...) asparagine" evidence="3">
    <location>
        <position position="591"/>
    </location>
</feature>
<feature type="glycosylation site" description="N-linked (GlcNAc...) asparagine" evidence="3">
    <location>
        <position position="640"/>
    </location>
</feature>
<feature type="glycosylation site" description="N-linked (GlcNAc...) asparagine" evidence="3">
    <location>
        <position position="654"/>
    </location>
</feature>
<feature type="glycosylation site" description="N-linked (GlcNAc...) asparagine" evidence="3">
    <location>
        <position position="679"/>
    </location>
</feature>
<feature type="glycosylation site" description="N-linked (GlcNAc...) asparagine" evidence="3">
    <location>
        <position position="723"/>
    </location>
</feature>
<feature type="glycosylation site" description="N-linked (GlcNAc...) asparagine" evidence="3">
    <location>
        <position position="744"/>
    </location>
</feature>
<feature type="glycosylation site" description="N-linked (GlcNAc...) asparagine" evidence="3">
    <location>
        <position position="793"/>
    </location>
</feature>
<feature type="glycosylation site" description="N-linked (GlcNAc...) asparagine" evidence="3">
    <location>
        <position position="807"/>
    </location>
</feature>
<feature type="glycosylation site" description="N-linked (GlcNAc...) asparagine" evidence="3">
    <location>
        <position position="832"/>
    </location>
</feature>
<feature type="glycosylation site" description="N-linked (GlcNAc...) asparagine" evidence="3">
    <location>
        <position position="876"/>
    </location>
</feature>
<feature type="glycosylation site" description="N-linked (GlcNAc...) asparagine" evidence="3">
    <location>
        <position position="897"/>
    </location>
</feature>
<feature type="glycosylation site" description="N-linked (GlcNAc...) asparagine" evidence="3">
    <location>
        <position position="946"/>
    </location>
</feature>
<feature type="glycosylation site" description="N-linked (GlcNAc...) asparagine" evidence="3">
    <location>
        <position position="960"/>
    </location>
</feature>
<feature type="glycosylation site" description="N-linked (GlcNAc...) asparagine" evidence="3">
    <location>
        <position position="985"/>
    </location>
</feature>
<feature type="glycosylation site" description="N-linked (GlcNAc...) asparagine" evidence="3">
    <location>
        <position position="1029"/>
    </location>
</feature>
<feature type="glycosylation site" description="N-linked (GlcNAc...) asparagine" evidence="3">
    <location>
        <position position="1050"/>
    </location>
</feature>
<feature type="glycosylation site" description="N-linked (GlcNAc...) asparagine" evidence="3">
    <location>
        <position position="1099"/>
    </location>
</feature>
<feature type="glycosylation site" description="N-linked (GlcNAc...) asparagine" evidence="3">
    <location>
        <position position="1113"/>
    </location>
</feature>
<feature type="glycosylation site" description="N-linked (GlcNAc...) asparagine" evidence="3">
    <location>
        <position position="1138"/>
    </location>
</feature>
<feature type="glycosylation site" description="N-linked (GlcNAc...) asparagine" evidence="3">
    <location>
        <position position="1182"/>
    </location>
</feature>
<feature type="glycosylation site" description="N-linked (GlcNAc...) asparagine" evidence="3">
    <location>
        <position position="1203"/>
    </location>
</feature>
<feature type="glycosylation site" description="N-linked (GlcNAc...) asparagine" evidence="3">
    <location>
        <position position="1252"/>
    </location>
</feature>
<feature type="glycosylation site" description="N-linked (GlcNAc...) asparagine" evidence="3">
    <location>
        <position position="1266"/>
    </location>
</feature>
<feature type="glycosylation site" description="N-linked (GlcNAc...) asparagine" evidence="3">
    <location>
        <position position="1291"/>
    </location>
</feature>
<feature type="glycosylation site" description="N-linked (GlcNAc...) asparagine" evidence="3">
    <location>
        <position position="1335"/>
    </location>
</feature>
<feature type="glycosylation site" description="N-linked (GlcNAc...) asparagine" evidence="3">
    <location>
        <position position="1356"/>
    </location>
</feature>
<feature type="glycosylation site" description="N-linked (GlcNAc...) asparagine" evidence="3">
    <location>
        <position position="1405"/>
    </location>
</feature>
<feature type="glycosylation site" description="N-linked (GlcNAc...) asparagine" evidence="3">
    <location>
        <position position="1419"/>
    </location>
</feature>
<feature type="glycosylation site" description="N-linked (GlcNAc...) asparagine" evidence="3">
    <location>
        <position position="1443"/>
    </location>
</feature>
<feature type="glycosylation site" description="N-linked (GlcNAc...) asparagine" evidence="3">
    <location>
        <position position="1487"/>
    </location>
</feature>
<feature type="glycosylation site" description="N-linked (GlcNAc...) asparagine" evidence="3">
    <location>
        <position position="1557"/>
    </location>
</feature>
<feature type="glycosylation site" description="N-linked (GlcNAc...) asparagine" evidence="3">
    <location>
        <position position="1571"/>
    </location>
</feature>
<feature type="glycosylation site" description="N-linked (GlcNAc...) asparagine" evidence="3">
    <location>
        <position position="1596"/>
    </location>
</feature>
<feature type="glycosylation site" description="N-linked (GlcNAc...) asparagine" evidence="3">
    <location>
        <position position="1640"/>
    </location>
</feature>
<feature type="glycosylation site" description="N-linked (GlcNAc...) asparagine" evidence="3">
    <location>
        <position position="1661"/>
    </location>
</feature>
<feature type="glycosylation site" description="N-linked (GlcNAc...) asparagine" evidence="3">
    <location>
        <position position="1710"/>
    </location>
</feature>
<feature type="glycosylation site" description="N-linked (GlcNAc...) asparagine" evidence="3">
    <location>
        <position position="1724"/>
    </location>
</feature>
<feature type="glycosylation site" description="N-linked (GlcNAc...) asparagine" evidence="3">
    <location>
        <position position="1749"/>
    </location>
</feature>
<feature type="glycosylation site" description="N-linked (GlcNAc...) asparagine" evidence="3">
    <location>
        <position position="1793"/>
    </location>
</feature>
<feature type="glycosylation site" description="N-linked (GlcNAc...) asparagine" evidence="3">
    <location>
        <position position="1814"/>
    </location>
</feature>
<feature type="glycosylation site" description="N-linked (GlcNAc...) asparagine" evidence="3">
    <location>
        <position position="1863"/>
    </location>
</feature>
<feature type="glycosylation site" description="N-linked (GlcNAc...) asparagine" evidence="3">
    <location>
        <position position="1877"/>
    </location>
</feature>
<feature type="glycosylation site" description="N-linked (GlcNAc...) asparagine" evidence="3">
    <location>
        <position position="1902"/>
    </location>
</feature>
<feature type="glycosylation site" description="N-linked (GlcNAc...) asparagine" evidence="3">
    <location>
        <position position="1946"/>
    </location>
</feature>
<feature type="glycosylation site" description="N-linked (GlcNAc...) asparagine" evidence="3">
    <location>
        <position position="1967"/>
    </location>
</feature>
<feature type="glycosylation site" description="N-linked (GlcNAc...) asparagine" evidence="3">
    <location>
        <position position="2016"/>
    </location>
</feature>
<feature type="glycosylation site" description="N-linked (GlcNAc...) asparagine" evidence="3">
    <location>
        <position position="2030"/>
    </location>
</feature>
<feature type="glycosylation site" description="N-linked (GlcNAc...) asparagine" evidence="3">
    <location>
        <position position="2055"/>
    </location>
</feature>
<feature type="glycosylation site" description="N-linked (GlcNAc...) asparagine" evidence="3">
    <location>
        <position position="2099"/>
    </location>
</feature>
<feature type="glycosylation site" description="N-linked (GlcNAc...) asparagine" evidence="3">
    <location>
        <position position="2120"/>
    </location>
</feature>
<feature type="glycosylation site" description="N-linked (GlcNAc...) asparagine" evidence="3">
    <location>
        <position position="2169"/>
    </location>
</feature>
<feature type="glycosylation site" description="N-linked (GlcNAc...) asparagine" evidence="3">
    <location>
        <position position="2183"/>
    </location>
</feature>
<feature type="glycosylation site" description="N-linked (GlcNAc...) asparagine" evidence="3">
    <location>
        <position position="2208"/>
    </location>
</feature>
<feature type="glycosylation site" description="N-linked (GlcNAc...) asparagine" evidence="3">
    <location>
        <position position="2252"/>
    </location>
</feature>
<feature type="glycosylation site" description="N-linked (GlcNAc...) asparagine" evidence="3">
    <location>
        <position position="2273"/>
    </location>
</feature>
<feature type="glycosylation site" description="N-linked (GlcNAc...) asparagine" evidence="3">
    <location>
        <position position="2322"/>
    </location>
</feature>
<feature type="glycosylation site" description="N-linked (GlcNAc...) asparagine" evidence="3">
    <location>
        <position position="2336"/>
    </location>
</feature>
<feature type="glycosylation site" description="N-linked (GlcNAc...) asparagine" evidence="3">
    <location>
        <position position="2361"/>
    </location>
</feature>
<feature type="glycosylation site" description="N-linked (GlcNAc...) asparagine" evidence="3">
    <location>
        <position position="2405"/>
    </location>
</feature>
<feature type="glycosylation site" description="N-linked (GlcNAc...) asparagine" evidence="3">
    <location>
        <position position="2426"/>
    </location>
</feature>
<feature type="glycosylation site" description="N-linked (GlcNAc...) asparagine" evidence="3">
    <location>
        <position position="2475"/>
    </location>
</feature>
<feature type="glycosylation site" description="N-linked (GlcNAc...) asparagine" evidence="3">
    <location>
        <position position="2489"/>
    </location>
</feature>
<feature type="glycosylation site" description="N-linked (GlcNAc...) asparagine" evidence="3">
    <location>
        <position position="2514"/>
    </location>
</feature>
<feature type="glycosylation site" description="N-linked (GlcNAc...) asparagine" evidence="3">
    <location>
        <position position="2558"/>
    </location>
</feature>
<feature type="glycosylation site" description="N-linked (GlcNAc...) asparagine" evidence="3">
    <location>
        <position position="2579"/>
    </location>
</feature>
<feature type="glycosylation site" description="N-linked (GlcNAc...) asparagine" evidence="3">
    <location>
        <position position="2628"/>
    </location>
</feature>
<feature type="glycosylation site" description="N-linked (GlcNAc...) asparagine" evidence="3">
    <location>
        <position position="2642"/>
    </location>
</feature>
<feature type="glycosylation site" description="N-linked (GlcNAc...) asparagine" evidence="3">
    <location>
        <position position="2667"/>
    </location>
</feature>
<feature type="glycosylation site" description="N-linked (GlcNAc...) asparagine" evidence="3">
    <location>
        <position position="2711"/>
    </location>
</feature>
<feature type="glycosylation site" description="N-linked (GlcNAc...) asparagine" evidence="3">
    <location>
        <position position="2732"/>
    </location>
</feature>
<feature type="glycosylation site" description="N-linked (GlcNAc...) asparagine" evidence="3">
    <location>
        <position position="2781"/>
    </location>
</feature>
<feature type="glycosylation site" description="N-linked (GlcNAc...) asparagine" evidence="3">
    <location>
        <position position="2795"/>
    </location>
</feature>
<feature type="glycosylation site" description="N-linked (GlcNAc...) asparagine" evidence="3">
    <location>
        <position position="2820"/>
    </location>
</feature>
<feature type="glycosylation site" description="N-linked (GlcNAc...) asparagine" evidence="3">
    <location>
        <position position="2864"/>
    </location>
</feature>
<feature type="glycosylation site" description="N-linked (GlcNAc...) asparagine" evidence="3">
    <location>
        <position position="2885"/>
    </location>
</feature>
<feature type="glycosylation site" description="N-linked (GlcNAc...) asparagine" evidence="3">
    <location>
        <position position="2934"/>
    </location>
</feature>
<feature type="glycosylation site" description="N-linked (GlcNAc...) asparagine" evidence="3">
    <location>
        <position position="2948"/>
    </location>
</feature>
<feature type="glycosylation site" description="N-linked (GlcNAc...) asparagine" evidence="3">
    <location>
        <position position="2973"/>
    </location>
</feature>
<feature type="glycosylation site" description="N-linked (GlcNAc...) asparagine" evidence="3">
    <location>
        <position position="3017"/>
    </location>
</feature>
<feature type="glycosylation site" description="N-linked (GlcNAc...) asparagine" evidence="3">
    <location>
        <position position="3038"/>
    </location>
</feature>
<feature type="glycosylation site" description="N-linked (GlcNAc...) asparagine" evidence="3">
    <location>
        <position position="3087"/>
    </location>
</feature>
<feature type="glycosylation site" description="N-linked (GlcNAc...) asparagine" evidence="3">
    <location>
        <position position="3101"/>
    </location>
</feature>
<feature type="glycosylation site" description="N-linked (GlcNAc...) asparagine" evidence="3">
    <location>
        <position position="3126"/>
    </location>
</feature>
<feature type="glycosylation site" description="N-linked (GlcNAc...) asparagine" evidence="3">
    <location>
        <position position="3170"/>
    </location>
</feature>
<feature type="glycosylation site" description="N-linked (GlcNAc...) asparagine" evidence="3">
    <location>
        <position position="3191"/>
    </location>
</feature>
<feature type="glycosylation site" description="N-linked (GlcNAc...) asparagine" evidence="3">
    <location>
        <position position="3229"/>
    </location>
</feature>
<feature type="glycosylation site" description="N-linked (GlcNAc...) asparagine" evidence="3">
    <location>
        <position position="3243"/>
    </location>
</feature>
<feature type="glycosylation site" description="N-linked (GlcNAc...) asparagine" evidence="3">
    <location>
        <position position="3268"/>
    </location>
</feature>
<feature type="glycosylation site" description="N-linked (GlcNAc...) asparagine" evidence="3">
    <location>
        <position position="3312"/>
    </location>
</feature>
<feature type="glycosylation site" description="N-linked (GlcNAc...) asparagine" evidence="3">
    <location>
        <position position="3333"/>
    </location>
</feature>
<feature type="glycosylation site" description="N-linked (GlcNAc...) asparagine" evidence="3">
    <location>
        <position position="3388"/>
    </location>
</feature>
<feature type="glycosylation site" description="N-linked (GlcNAc...) asparagine" evidence="3">
    <location>
        <position position="3401"/>
    </location>
</feature>
<feature type="glycosylation site" description="N-linked (GlcNAc...) asparagine" evidence="3">
    <location>
        <position position="3449"/>
    </location>
</feature>
<feature type="glycosylation site" description="N-linked (GlcNAc...) asparagine" evidence="3">
    <location>
        <position position="3456"/>
    </location>
</feature>
<feature type="glycosylation site" description="N-linked (GlcNAc...) asparagine" evidence="3">
    <location>
        <position position="3559"/>
    </location>
</feature>
<feature type="glycosylation site" description="N-linked (GlcNAc...) asparagine" evidence="3">
    <location>
        <position position="3650"/>
    </location>
</feature>
<feature type="disulfide bond" evidence="5 15 16">
    <location>
        <begin position="43"/>
        <end position="141"/>
    </location>
</feature>
<feature type="disulfide bond" evidence="5 15 16">
    <location>
        <begin position="72"/>
        <end position="104"/>
    </location>
</feature>
<feature type="disulfide bond" evidence="5 20 21">
    <location>
        <begin position="182"/>
        <end position="280"/>
    </location>
</feature>
<feature type="disulfide bond" description="Interchain (with C-294)" evidence="10 21">
    <location>
        <position position="201"/>
    </location>
</feature>
<feature type="disulfide bond" evidence="5 20 21">
    <location>
        <begin position="211"/>
        <end position="243"/>
    </location>
</feature>
<feature type="disulfide bond" description="Interchain (with C-201)" evidence="10 21">
    <location>
        <position position="294"/>
    </location>
</feature>
<feature type="disulfide bond" evidence="5 17 18 19">
    <location>
        <begin position="345"/>
        <end position="443"/>
    </location>
</feature>
<feature type="disulfide bond" evidence="5 17 18 19">
    <location>
        <begin position="374"/>
        <end position="406"/>
    </location>
</feature>
<feature type="mutagenesis site" description="Does not abolish species-specific lysin binding; when associated with P-228." evidence="5">
    <original>F</original>
    <variation>Y</variation>
    <location>
        <position position="181"/>
    </location>
</feature>
<feature type="mutagenesis site" description="Does not abolish species-specific lysin binding; when associated with Y-181." evidence="5">
    <original>L</original>
    <variation>P</variation>
    <location>
        <position position="228"/>
    </location>
</feature>
<feature type="mutagenesis site" description="No effect on lysin binding." evidence="5">
    <original>E</original>
    <variation>G</variation>
    <location>
        <position position="384"/>
    </location>
</feature>
<feature type="mutagenesis site" description="Reduces lysin binding." evidence="5">
    <original>N</original>
    <variation>A</variation>
    <location>
        <position position="388"/>
    </location>
</feature>
<feature type="mutagenesis site" description="Reduces lysin binding. Abolishes lysin binding; when associated with A-388." evidence="5">
    <original>M</original>
    <variation>K</variation>
    <location>
        <position position="389"/>
    </location>
</feature>
<feature type="sequence conflict" description="In Ref. 2; AAC31408." evidence="9" ref="2">
    <original>E</original>
    <variation>Q</variation>
    <location>
        <position position="2760"/>
    </location>
</feature>
<feature type="sequence conflict" description="In Ref. 3; AAK20409." evidence="9" ref="3">
    <original>F</original>
    <variation>V</variation>
    <location>
        <position position="3471"/>
    </location>
</feature>
<feature type="strand" evidence="22">
    <location>
        <begin position="39"/>
        <end position="42"/>
    </location>
</feature>
<feature type="strand" evidence="22">
    <location>
        <begin position="51"/>
        <end position="55"/>
    </location>
</feature>
<feature type="strand" evidence="22">
    <location>
        <begin position="61"/>
        <end position="63"/>
    </location>
</feature>
<feature type="strand" evidence="22">
    <location>
        <begin position="65"/>
        <end position="72"/>
    </location>
</feature>
<feature type="strand" evidence="22">
    <location>
        <begin position="75"/>
        <end position="78"/>
    </location>
</feature>
<feature type="strand" evidence="22">
    <location>
        <begin position="86"/>
        <end position="91"/>
    </location>
</feature>
<feature type="strand" evidence="22">
    <location>
        <begin position="96"/>
        <end position="98"/>
    </location>
</feature>
<feature type="strand" evidence="22">
    <location>
        <begin position="107"/>
        <end position="111"/>
    </location>
</feature>
<feature type="strand" evidence="22">
    <location>
        <begin position="118"/>
        <end position="129"/>
    </location>
</feature>
<feature type="strand" evidence="22">
    <location>
        <begin position="134"/>
        <end position="144"/>
    </location>
</feature>
<feature type="strand" evidence="25">
    <location>
        <begin position="176"/>
        <end position="181"/>
    </location>
</feature>
<feature type="strand" evidence="25">
    <location>
        <begin position="190"/>
        <end position="196"/>
    </location>
</feature>
<feature type="strand" evidence="25">
    <location>
        <begin position="206"/>
        <end position="211"/>
    </location>
</feature>
<feature type="strand" evidence="25">
    <location>
        <begin position="214"/>
        <end position="218"/>
    </location>
</feature>
<feature type="strand" evidence="25">
    <location>
        <begin position="222"/>
        <end position="230"/>
    </location>
</feature>
<feature type="strand" evidence="25">
    <location>
        <begin position="246"/>
        <end position="251"/>
    </location>
</feature>
<feature type="strand" evidence="25">
    <location>
        <begin position="254"/>
        <end position="267"/>
    </location>
</feature>
<feature type="strand" evidence="25">
    <location>
        <begin position="269"/>
        <end position="271"/>
    </location>
</feature>
<feature type="strand" evidence="25">
    <location>
        <begin position="274"/>
        <end position="283"/>
    </location>
</feature>
<feature type="strand" evidence="23">
    <location>
        <begin position="340"/>
        <end position="344"/>
    </location>
</feature>
<feature type="strand" evidence="24">
    <location>
        <begin position="347"/>
        <end position="351"/>
    </location>
</feature>
<feature type="strand" evidence="23">
    <location>
        <begin position="353"/>
        <end position="359"/>
    </location>
</feature>
<feature type="strand" evidence="23">
    <location>
        <begin position="367"/>
        <end position="374"/>
    </location>
</feature>
<feature type="strand" evidence="23">
    <location>
        <begin position="377"/>
        <end position="381"/>
    </location>
</feature>
<feature type="strand" evidence="23">
    <location>
        <begin position="385"/>
        <end position="395"/>
    </location>
</feature>
<feature type="helix" evidence="23">
    <location>
        <begin position="396"/>
        <end position="398"/>
    </location>
</feature>
<feature type="strand" evidence="23">
    <location>
        <begin position="409"/>
        <end position="413"/>
    </location>
</feature>
<feature type="strand" evidence="23">
    <location>
        <begin position="418"/>
        <end position="435"/>
    </location>
</feature>
<feature type="strand" evidence="23">
    <location>
        <begin position="437"/>
        <end position="446"/>
    </location>
</feature>